<keyword id="KW-1185">Reference proteome</keyword>
<name>YDT3_SCHPO</name>
<dbReference type="EMBL" id="CU329670">
    <property type="protein sequence ID" value="CAB11065.1"/>
    <property type="molecule type" value="Genomic_DNA"/>
</dbReference>
<dbReference type="PIR" id="T39010">
    <property type="entry name" value="T39010"/>
</dbReference>
<dbReference type="FunCoup" id="O14208">
    <property type="interactions" value="3"/>
</dbReference>
<dbReference type="STRING" id="284812.O14208"/>
<dbReference type="PaxDb" id="4896-SPAC6B12.03c.1"/>
<dbReference type="EnsemblFungi" id="SPAC6B12.03c.1">
    <property type="protein sequence ID" value="SPAC6B12.03c.1:pep"/>
    <property type="gene ID" value="SPAC6B12.03c"/>
</dbReference>
<dbReference type="KEGG" id="spo:2543232"/>
<dbReference type="PomBase" id="SPAC6B12.03c"/>
<dbReference type="VEuPathDB" id="FungiDB:SPAC6B12.03c"/>
<dbReference type="HOGENOM" id="CLU_903617_0_0_1"/>
<dbReference type="InParanoid" id="O14208"/>
<dbReference type="OMA" id="FEEPMKS"/>
<dbReference type="PhylomeDB" id="O14208"/>
<dbReference type="Reactome" id="R-SPO-1257604">
    <property type="pathway name" value="PIP3 activates AKT signaling"/>
</dbReference>
<dbReference type="Reactome" id="R-SPO-389357">
    <property type="pathway name" value="CD28 dependent PI3K/Akt signaling"/>
</dbReference>
<dbReference type="Reactome" id="R-SPO-5218920">
    <property type="pathway name" value="VEGFR2 mediated vascular permeability"/>
</dbReference>
<dbReference type="Reactome" id="R-SPO-6804757">
    <property type="pathway name" value="Regulation of TP53 Degradation"/>
</dbReference>
<dbReference type="Reactome" id="R-SPO-9856530">
    <property type="pathway name" value="High laminar flow shear stress activates signaling by PIEZO1 and PECAM1:CDH5:KDR in endothelial cells"/>
</dbReference>
<dbReference type="PRO" id="PR:O14208"/>
<dbReference type="Proteomes" id="UP000002485">
    <property type="component" value="Chromosome I"/>
</dbReference>
<dbReference type="GO" id="GO:0005829">
    <property type="term" value="C:cytosol"/>
    <property type="evidence" value="ECO:0007005"/>
    <property type="project" value="PomBase"/>
</dbReference>
<dbReference type="GO" id="GO:0005634">
    <property type="term" value="C:nucleus"/>
    <property type="evidence" value="ECO:0007005"/>
    <property type="project" value="PomBase"/>
</dbReference>
<dbReference type="GO" id="GO:0031932">
    <property type="term" value="C:TORC2 complex"/>
    <property type="evidence" value="ECO:0000318"/>
    <property type="project" value="GO_Central"/>
</dbReference>
<dbReference type="GO" id="GO:0038203">
    <property type="term" value="P:TORC2 signaling"/>
    <property type="evidence" value="ECO:0000318"/>
    <property type="project" value="GO_Central"/>
</dbReference>
<dbReference type="InterPro" id="IPR013745">
    <property type="entry name" value="Bit61/PRR5"/>
</dbReference>
<dbReference type="PANTHER" id="PTHR32428">
    <property type="entry name" value="TARGET OF RAPAMYCIN COMPLEX 2 SUBUNIT BIT61-RELATED"/>
    <property type="match status" value="1"/>
</dbReference>
<dbReference type="PANTHER" id="PTHR32428:SF2">
    <property type="entry name" value="TARGET OF RAPAMYCIN COMPLEX 2 SUBUNIT BIT61-RELATED"/>
    <property type="match status" value="1"/>
</dbReference>
<dbReference type="Pfam" id="PF08539">
    <property type="entry name" value="HbrB"/>
    <property type="match status" value="1"/>
</dbReference>
<gene>
    <name type="ORF">SPAC6B12.03c</name>
</gene>
<protein>
    <recommendedName>
        <fullName>Uncharacterized protein C6B12.03c</fullName>
    </recommendedName>
</protein>
<accession>O14208</accession>
<proteinExistence type="predicted"/>
<organism>
    <name type="scientific">Schizosaccharomyces pombe (strain 972 / ATCC 24843)</name>
    <name type="common">Fission yeast</name>
    <dbReference type="NCBI Taxonomy" id="284812"/>
    <lineage>
        <taxon>Eukaryota</taxon>
        <taxon>Fungi</taxon>
        <taxon>Dikarya</taxon>
        <taxon>Ascomycota</taxon>
        <taxon>Taphrinomycotina</taxon>
        <taxon>Schizosaccharomycetes</taxon>
        <taxon>Schizosaccharomycetales</taxon>
        <taxon>Schizosaccharomycetaceae</taxon>
        <taxon>Schizosaccharomyces</taxon>
    </lineage>
</organism>
<reference key="1">
    <citation type="journal article" date="2002" name="Nature">
        <title>The genome sequence of Schizosaccharomyces pombe.</title>
        <authorList>
            <person name="Wood V."/>
            <person name="Gwilliam R."/>
            <person name="Rajandream M.A."/>
            <person name="Lyne M.H."/>
            <person name="Lyne R."/>
            <person name="Stewart A."/>
            <person name="Sgouros J.G."/>
            <person name="Peat N."/>
            <person name="Hayles J."/>
            <person name="Baker S.G."/>
            <person name="Basham D."/>
            <person name="Bowman S."/>
            <person name="Brooks K."/>
            <person name="Brown D."/>
            <person name="Brown S."/>
            <person name="Chillingworth T."/>
            <person name="Churcher C.M."/>
            <person name="Collins M."/>
            <person name="Connor R."/>
            <person name="Cronin A."/>
            <person name="Davis P."/>
            <person name="Feltwell T."/>
            <person name="Fraser A."/>
            <person name="Gentles S."/>
            <person name="Goble A."/>
            <person name="Hamlin N."/>
            <person name="Harris D.E."/>
            <person name="Hidalgo J."/>
            <person name="Hodgson G."/>
            <person name="Holroyd S."/>
            <person name="Hornsby T."/>
            <person name="Howarth S."/>
            <person name="Huckle E.J."/>
            <person name="Hunt S."/>
            <person name="Jagels K."/>
            <person name="James K.D."/>
            <person name="Jones L."/>
            <person name="Jones M."/>
            <person name="Leather S."/>
            <person name="McDonald S."/>
            <person name="McLean J."/>
            <person name="Mooney P."/>
            <person name="Moule S."/>
            <person name="Mungall K.L."/>
            <person name="Murphy L.D."/>
            <person name="Niblett D."/>
            <person name="Odell C."/>
            <person name="Oliver K."/>
            <person name="O'Neil S."/>
            <person name="Pearson D."/>
            <person name="Quail M.A."/>
            <person name="Rabbinowitsch E."/>
            <person name="Rutherford K.M."/>
            <person name="Rutter S."/>
            <person name="Saunders D."/>
            <person name="Seeger K."/>
            <person name="Sharp S."/>
            <person name="Skelton J."/>
            <person name="Simmonds M.N."/>
            <person name="Squares R."/>
            <person name="Squares S."/>
            <person name="Stevens K."/>
            <person name="Taylor K."/>
            <person name="Taylor R.G."/>
            <person name="Tivey A."/>
            <person name="Walsh S.V."/>
            <person name="Warren T."/>
            <person name="Whitehead S."/>
            <person name="Woodward J.R."/>
            <person name="Volckaert G."/>
            <person name="Aert R."/>
            <person name="Robben J."/>
            <person name="Grymonprez B."/>
            <person name="Weltjens I."/>
            <person name="Vanstreels E."/>
            <person name="Rieger M."/>
            <person name="Schaefer M."/>
            <person name="Mueller-Auer S."/>
            <person name="Gabel C."/>
            <person name="Fuchs M."/>
            <person name="Duesterhoeft A."/>
            <person name="Fritzc C."/>
            <person name="Holzer E."/>
            <person name="Moestl D."/>
            <person name="Hilbert H."/>
            <person name="Borzym K."/>
            <person name="Langer I."/>
            <person name="Beck A."/>
            <person name="Lehrach H."/>
            <person name="Reinhardt R."/>
            <person name="Pohl T.M."/>
            <person name="Eger P."/>
            <person name="Zimmermann W."/>
            <person name="Wedler H."/>
            <person name="Wambutt R."/>
            <person name="Purnelle B."/>
            <person name="Goffeau A."/>
            <person name="Cadieu E."/>
            <person name="Dreano S."/>
            <person name="Gloux S."/>
            <person name="Lelaure V."/>
            <person name="Mottier S."/>
            <person name="Galibert F."/>
            <person name="Aves S.J."/>
            <person name="Xiang Z."/>
            <person name="Hunt C."/>
            <person name="Moore K."/>
            <person name="Hurst S.M."/>
            <person name="Lucas M."/>
            <person name="Rochet M."/>
            <person name="Gaillardin C."/>
            <person name="Tallada V.A."/>
            <person name="Garzon A."/>
            <person name="Thode G."/>
            <person name="Daga R.R."/>
            <person name="Cruzado L."/>
            <person name="Jimenez J."/>
            <person name="Sanchez M."/>
            <person name="del Rey F."/>
            <person name="Benito J."/>
            <person name="Dominguez A."/>
            <person name="Revuelta J.L."/>
            <person name="Moreno S."/>
            <person name="Armstrong J."/>
            <person name="Forsburg S.L."/>
            <person name="Cerutti L."/>
            <person name="Lowe T."/>
            <person name="McCombie W.R."/>
            <person name="Paulsen I."/>
            <person name="Potashkin J."/>
            <person name="Shpakovski G.V."/>
            <person name="Ussery D."/>
            <person name="Barrell B.G."/>
            <person name="Nurse P."/>
        </authorList>
    </citation>
    <scope>NUCLEOTIDE SEQUENCE [LARGE SCALE GENOMIC DNA]</scope>
    <source>
        <strain>972 / ATCC 24843</strain>
    </source>
</reference>
<sequence>MKLRDKWKIYLGLTTIKVQCPCFFLFHNDENRTTTSNLDSVKSKKKRRKTISDASIVSNGSLVSHPSIDKGKLSILKRYKMSHRLTAIDKLRPLTVLVAWKQLNIAMRPIFPQHRYTEQDKKNWKKKVIIEDLNFLVLRCICACEAISDFEELLGNMRIGLIIDISLLGMNSNESSFLHYLVEVWSIFYLEILPYIEATFLPVTFAKFEIAQLFEEPMKTYWLKKSANIDLKLFSIWVFRKFVVMPKLKKTNRFIEIPQLNTQQQILLVQMISIISLIKPQDESEDLLMNWLNELTLKFLYV</sequence>
<feature type="chain" id="PRO_0000116663" description="Uncharacterized protein C6B12.03c">
    <location>
        <begin position="1"/>
        <end position="302"/>
    </location>
</feature>